<reference key="1">
    <citation type="journal article" date="2003" name="Proc. Natl. Acad. Sci. U.S.A.">
        <title>The complete genome sequence of the Arabidopsis and tomato pathogen Pseudomonas syringae pv. tomato DC3000.</title>
        <authorList>
            <person name="Buell C.R."/>
            <person name="Joardar V."/>
            <person name="Lindeberg M."/>
            <person name="Selengut J."/>
            <person name="Paulsen I.T."/>
            <person name="Gwinn M.L."/>
            <person name="Dodson R.J."/>
            <person name="DeBoy R.T."/>
            <person name="Durkin A.S."/>
            <person name="Kolonay J.F."/>
            <person name="Madupu R."/>
            <person name="Daugherty S.C."/>
            <person name="Brinkac L.M."/>
            <person name="Beanan M.J."/>
            <person name="Haft D.H."/>
            <person name="Nelson W.C."/>
            <person name="Davidsen T.M."/>
            <person name="Zafar N."/>
            <person name="Zhou L."/>
            <person name="Liu J."/>
            <person name="Yuan Q."/>
            <person name="Khouri H.M."/>
            <person name="Fedorova N.B."/>
            <person name="Tran B."/>
            <person name="Russell D."/>
            <person name="Berry K.J."/>
            <person name="Utterback T.R."/>
            <person name="Van Aken S.E."/>
            <person name="Feldblyum T.V."/>
            <person name="D'Ascenzo M."/>
            <person name="Deng W.-L."/>
            <person name="Ramos A.R."/>
            <person name="Alfano J.R."/>
            <person name="Cartinhour S."/>
            <person name="Chatterjee A.K."/>
            <person name="Delaney T.P."/>
            <person name="Lazarowitz S.G."/>
            <person name="Martin G.B."/>
            <person name="Schneider D.J."/>
            <person name="Tang X."/>
            <person name="Bender C.L."/>
            <person name="White O."/>
            <person name="Fraser C.M."/>
            <person name="Collmer A."/>
        </authorList>
    </citation>
    <scope>NUCLEOTIDE SEQUENCE [LARGE SCALE GENOMIC DNA]</scope>
    <source>
        <strain>ATCC BAA-871 / DC3000</strain>
    </source>
</reference>
<feature type="chain" id="PRO_0000251052" description="Probable chemoreceptor glutamine deamidase CheD">
    <location>
        <begin position="1"/>
        <end position="168"/>
    </location>
</feature>
<protein>
    <recommendedName>
        <fullName evidence="1">Probable chemoreceptor glutamine deamidase CheD</fullName>
        <ecNumber evidence="1">3.5.1.44</ecNumber>
    </recommendedName>
</protein>
<name>CHED_PSESM</name>
<dbReference type="EC" id="3.5.1.44" evidence="1"/>
<dbReference type="EMBL" id="AE016853">
    <property type="protein sequence ID" value="AAO54443.1"/>
    <property type="molecule type" value="Genomic_DNA"/>
</dbReference>
<dbReference type="RefSeq" id="NP_790748.1">
    <property type="nucleotide sequence ID" value="NC_004578.1"/>
</dbReference>
<dbReference type="RefSeq" id="WP_005769998.1">
    <property type="nucleotide sequence ID" value="NC_004578.1"/>
</dbReference>
<dbReference type="SMR" id="Q888V7"/>
<dbReference type="STRING" id="223283.PSPTO_0909"/>
<dbReference type="DNASU" id="1182538"/>
<dbReference type="GeneID" id="1182538"/>
<dbReference type="KEGG" id="pst:PSPTO_0909"/>
<dbReference type="PATRIC" id="fig|223283.9.peg.920"/>
<dbReference type="eggNOG" id="COG1871">
    <property type="taxonomic scope" value="Bacteria"/>
</dbReference>
<dbReference type="HOGENOM" id="CLU_087854_1_1_6"/>
<dbReference type="OrthoDB" id="9807202at2"/>
<dbReference type="PhylomeDB" id="Q888V7"/>
<dbReference type="Proteomes" id="UP000002515">
    <property type="component" value="Chromosome"/>
</dbReference>
<dbReference type="GO" id="GO:0050568">
    <property type="term" value="F:protein-glutamine glutaminase activity"/>
    <property type="evidence" value="ECO:0007669"/>
    <property type="project" value="UniProtKB-UniRule"/>
</dbReference>
<dbReference type="GO" id="GO:0006935">
    <property type="term" value="P:chemotaxis"/>
    <property type="evidence" value="ECO:0007669"/>
    <property type="project" value="UniProtKB-UniRule"/>
</dbReference>
<dbReference type="CDD" id="cd16352">
    <property type="entry name" value="CheD"/>
    <property type="match status" value="1"/>
</dbReference>
<dbReference type="Gene3D" id="3.30.1330.200">
    <property type="match status" value="1"/>
</dbReference>
<dbReference type="HAMAP" id="MF_01440">
    <property type="entry name" value="CheD"/>
    <property type="match status" value="1"/>
</dbReference>
<dbReference type="InterPro" id="IPR038592">
    <property type="entry name" value="CheD-like_sf"/>
</dbReference>
<dbReference type="InterPro" id="IPR005659">
    <property type="entry name" value="Chemorcpt_Glu_NH3ase_CheD"/>
</dbReference>
<dbReference type="InterPro" id="IPR011324">
    <property type="entry name" value="Cytotoxic_necrot_fac-like_cat"/>
</dbReference>
<dbReference type="NCBIfam" id="NF010020">
    <property type="entry name" value="PRK13498.1"/>
    <property type="match status" value="1"/>
</dbReference>
<dbReference type="PANTHER" id="PTHR35147:SF3">
    <property type="entry name" value="CHEMORECEPTOR GLUTAMINE DEAMIDASE CHED 1-RELATED"/>
    <property type="match status" value="1"/>
</dbReference>
<dbReference type="PANTHER" id="PTHR35147">
    <property type="entry name" value="CHEMORECEPTOR GLUTAMINE DEAMIDASE CHED-RELATED"/>
    <property type="match status" value="1"/>
</dbReference>
<dbReference type="Pfam" id="PF03975">
    <property type="entry name" value="CheD"/>
    <property type="match status" value="1"/>
</dbReference>
<dbReference type="SUPFAM" id="SSF64438">
    <property type="entry name" value="CNF1/YfiH-like putative cysteine hydrolases"/>
    <property type="match status" value="1"/>
</dbReference>
<organism>
    <name type="scientific">Pseudomonas syringae pv. tomato (strain ATCC BAA-871 / DC3000)</name>
    <dbReference type="NCBI Taxonomy" id="223283"/>
    <lineage>
        <taxon>Bacteria</taxon>
        <taxon>Pseudomonadati</taxon>
        <taxon>Pseudomonadota</taxon>
        <taxon>Gammaproteobacteria</taxon>
        <taxon>Pseudomonadales</taxon>
        <taxon>Pseudomonadaceae</taxon>
        <taxon>Pseudomonas</taxon>
    </lineage>
</organism>
<accession>Q888V7</accession>
<keyword id="KW-0145">Chemotaxis</keyword>
<keyword id="KW-0378">Hydrolase</keyword>
<keyword id="KW-1185">Reference proteome</keyword>
<evidence type="ECO:0000255" key="1">
    <source>
        <dbReference type="HAMAP-Rule" id="MF_01440"/>
    </source>
</evidence>
<comment type="function">
    <text evidence="1">Probably deamidates glutamine residues to glutamate on methyl-accepting chemotaxis receptors (MCPs), playing an important role in chemotaxis.</text>
</comment>
<comment type="catalytic activity">
    <reaction evidence="1">
        <text>L-glutaminyl-[protein] + H2O = L-glutamyl-[protein] + NH4(+)</text>
        <dbReference type="Rhea" id="RHEA:16441"/>
        <dbReference type="Rhea" id="RHEA-COMP:10207"/>
        <dbReference type="Rhea" id="RHEA-COMP:10208"/>
        <dbReference type="ChEBI" id="CHEBI:15377"/>
        <dbReference type="ChEBI" id="CHEBI:28938"/>
        <dbReference type="ChEBI" id="CHEBI:29973"/>
        <dbReference type="ChEBI" id="CHEBI:30011"/>
        <dbReference type="EC" id="3.5.1.44"/>
    </reaction>
</comment>
<comment type="similarity">
    <text evidence="1">Belongs to the CheD family.</text>
</comment>
<sequence length="168" mass="19160">MRKPVGAIEIVLAPGEVVFETRPARLRTLLGSCVAITFWHPQQHIGGMCHFMLPHRPHKHKALDGRYGDEALEMLIRHALANHTKPRDYQVKLFGGGQMFPEQQNDSQQLNVADLNVHAALAMAERHRLQLKAQDMGRTGHRTIIFDLWDGNVWVKHQPIEVTEKDAR</sequence>
<proteinExistence type="inferred from homology"/>
<gene>
    <name evidence="1" type="primary">cheD</name>
    <name type="ordered locus">PSPTO_0909</name>
</gene>